<reference key="1">
    <citation type="journal article" date="1993" name="J. Physiol. Paris">
        <title>Roles for arachidonic acid and GTP-binding proteins in synaptic transmission.</title>
        <authorList>
            <person name="Durgerian S."/>
            <person name="Bahls F."/>
            <person name="Richmond J."/>
            <person name="Doyle R.T."/>
            <person name="Larson D.D."/>
            <person name="Haydon P.G."/>
        </authorList>
    </citation>
    <scope>NUCLEOTIDE SEQUENCE [MRNA]</scope>
    <source>
        <strain>Oregon red</strain>
        <tissue>Central ganglion</tissue>
    </source>
</reference>
<name>GNAO_PLATR</name>
<dbReference type="EMBL" id="L18921">
    <property type="protein sequence ID" value="AAC41539.1"/>
    <property type="molecule type" value="mRNA"/>
</dbReference>
<dbReference type="SMR" id="P51877"/>
<dbReference type="GO" id="GO:0005737">
    <property type="term" value="C:cytoplasm"/>
    <property type="evidence" value="ECO:0007669"/>
    <property type="project" value="TreeGrafter"/>
</dbReference>
<dbReference type="GO" id="GO:0005834">
    <property type="term" value="C:heterotrimeric G-protein complex"/>
    <property type="evidence" value="ECO:0007669"/>
    <property type="project" value="TreeGrafter"/>
</dbReference>
<dbReference type="GO" id="GO:0001664">
    <property type="term" value="F:G protein-coupled receptor binding"/>
    <property type="evidence" value="ECO:0007669"/>
    <property type="project" value="TreeGrafter"/>
</dbReference>
<dbReference type="GO" id="GO:0031683">
    <property type="term" value="F:G-protein beta/gamma-subunit complex binding"/>
    <property type="evidence" value="ECO:0007669"/>
    <property type="project" value="InterPro"/>
</dbReference>
<dbReference type="GO" id="GO:0005525">
    <property type="term" value="F:GTP binding"/>
    <property type="evidence" value="ECO:0007669"/>
    <property type="project" value="UniProtKB-KW"/>
</dbReference>
<dbReference type="GO" id="GO:0003924">
    <property type="term" value="F:GTPase activity"/>
    <property type="evidence" value="ECO:0007669"/>
    <property type="project" value="InterPro"/>
</dbReference>
<dbReference type="GO" id="GO:0046872">
    <property type="term" value="F:metal ion binding"/>
    <property type="evidence" value="ECO:0007669"/>
    <property type="project" value="UniProtKB-KW"/>
</dbReference>
<dbReference type="GO" id="GO:0007188">
    <property type="term" value="P:adenylate cyclase-modulating G protein-coupled receptor signaling pathway"/>
    <property type="evidence" value="ECO:0007669"/>
    <property type="project" value="InterPro"/>
</dbReference>
<dbReference type="CDD" id="cd00066">
    <property type="entry name" value="G-alpha"/>
    <property type="match status" value="1"/>
</dbReference>
<dbReference type="FunFam" id="1.10.400.10:FF:000001">
    <property type="entry name" value="Guanine nucleotide-binding protein G(I) subunit alpha"/>
    <property type="match status" value="1"/>
</dbReference>
<dbReference type="FunFam" id="3.40.50.300:FF:003559">
    <property type="entry name" value="Guanine nucleotide-binding protein G(i) subunit alpha-1"/>
    <property type="match status" value="1"/>
</dbReference>
<dbReference type="FunFam" id="3.40.50.300:FF:002307">
    <property type="entry name" value="Guanine nucleotide-binding protein G(k) subunit alpha"/>
    <property type="match status" value="1"/>
</dbReference>
<dbReference type="Gene3D" id="1.10.400.10">
    <property type="entry name" value="GI Alpha 1, domain 2-like"/>
    <property type="match status" value="1"/>
</dbReference>
<dbReference type="Gene3D" id="3.40.50.300">
    <property type="entry name" value="P-loop containing nucleotide triphosphate hydrolases"/>
    <property type="match status" value="1"/>
</dbReference>
<dbReference type="InterPro" id="IPR001408">
    <property type="entry name" value="Gprotein_alpha_I"/>
</dbReference>
<dbReference type="InterPro" id="IPR001019">
    <property type="entry name" value="Gprotein_alpha_su"/>
</dbReference>
<dbReference type="InterPro" id="IPR011025">
    <property type="entry name" value="GproteinA_insert"/>
</dbReference>
<dbReference type="InterPro" id="IPR027417">
    <property type="entry name" value="P-loop_NTPase"/>
</dbReference>
<dbReference type="PANTHER" id="PTHR10218:SF362">
    <property type="entry name" value="G PROTEIN ALPHA O SUBUNIT"/>
    <property type="match status" value="1"/>
</dbReference>
<dbReference type="PANTHER" id="PTHR10218">
    <property type="entry name" value="GTP-BINDING PROTEIN ALPHA SUBUNIT"/>
    <property type="match status" value="1"/>
</dbReference>
<dbReference type="Pfam" id="PF00503">
    <property type="entry name" value="G-alpha"/>
    <property type="match status" value="1"/>
</dbReference>
<dbReference type="PRINTS" id="PR00318">
    <property type="entry name" value="GPROTEINA"/>
</dbReference>
<dbReference type="PRINTS" id="PR00441">
    <property type="entry name" value="GPROTEINAI"/>
</dbReference>
<dbReference type="SMART" id="SM00275">
    <property type="entry name" value="G_alpha"/>
    <property type="match status" value="1"/>
</dbReference>
<dbReference type="SUPFAM" id="SSF52540">
    <property type="entry name" value="P-loop containing nucleoside triphosphate hydrolases"/>
    <property type="match status" value="1"/>
</dbReference>
<dbReference type="SUPFAM" id="SSF47895">
    <property type="entry name" value="Transducin (alpha subunit), insertion domain"/>
    <property type="match status" value="1"/>
</dbReference>
<dbReference type="PROSITE" id="PS51882">
    <property type="entry name" value="G_ALPHA"/>
    <property type="match status" value="1"/>
</dbReference>
<accession>P51877</accession>
<organism>
    <name type="scientific">Planorbella trivolvis</name>
    <name type="common">Marsh rams-horn</name>
    <name type="synonym">Helisoma trivolvis</name>
    <dbReference type="NCBI Taxonomy" id="283763"/>
    <lineage>
        <taxon>Eukaryota</taxon>
        <taxon>Metazoa</taxon>
        <taxon>Spiralia</taxon>
        <taxon>Lophotrochozoa</taxon>
        <taxon>Mollusca</taxon>
        <taxon>Gastropoda</taxon>
        <taxon>Heterobranchia</taxon>
        <taxon>Euthyneura</taxon>
        <taxon>Panpulmonata</taxon>
        <taxon>Hygrophila</taxon>
        <taxon>Lymnaeoidea</taxon>
        <taxon>Planorbidae</taxon>
        <taxon>Planorbella</taxon>
    </lineage>
</organism>
<sequence length="354" mass="40259">MGCTLSAEERAAMERSKAIEKNLKEDGMQAAKDIKLLLLGAGESGKSTIVKQMKIIHEGGFTSEDTKQYKPVVYSNTIQSLVAIIRAMGTLSIPFGDNERESDAKMVLDVIARMEDTEPFSEELLAAMKRLWVDSGVQECLGRANEYQLNDSAKYFLDDLDRLGAKDYMPTEQDILRTRVKTTGIVEVHFSFKNLNFKLFDVGGQRSERKKWIHCFEDVTAIIFCVAMSEYDQVLHEDETTNRMQESLKLFDSICNNKWFTETSIILFLNKKDLFEEKIKKSPLTICFPEYTGKQMYQEASAYIQAQFEAKNKSSAKEIYCHQTCATDTNNIQFVFDAVTDVIIANNLRGCGLY</sequence>
<evidence type="ECO:0000250" key="1"/>
<evidence type="ECO:0000255" key="2"/>
<evidence type="ECO:0000255" key="3">
    <source>
        <dbReference type="PROSITE-ProRule" id="PRU01230"/>
    </source>
</evidence>
<evidence type="ECO:0000305" key="4"/>
<comment type="function">
    <text>Guanine nucleotide-binding proteins (G proteins) are involved as modulators or transducers in various transmembrane signaling systems. The G(o) protein function is not clear.</text>
</comment>
<comment type="subunit">
    <text>G proteins are composed of 3 units; alpha, beta and gamma. The alpha chain contains the guanine nucleotide binding site.</text>
</comment>
<comment type="similarity">
    <text evidence="4">Belongs to the G-alpha family. G(i/o/t/z) subfamily.</text>
</comment>
<protein>
    <recommendedName>
        <fullName>Guanine nucleotide-binding protein G(o) subunit alpha</fullName>
    </recommendedName>
</protein>
<keyword id="KW-0342">GTP-binding</keyword>
<keyword id="KW-0449">Lipoprotein</keyword>
<keyword id="KW-0460">Magnesium</keyword>
<keyword id="KW-0479">Metal-binding</keyword>
<keyword id="KW-0519">Myristate</keyword>
<keyword id="KW-0547">Nucleotide-binding</keyword>
<keyword id="KW-0564">Palmitate</keyword>
<keyword id="KW-0807">Transducer</keyword>
<proteinExistence type="evidence at transcript level"/>
<feature type="initiator methionine" description="Removed" evidence="1">
    <location>
        <position position="1"/>
    </location>
</feature>
<feature type="chain" id="PRO_0000203711" description="Guanine nucleotide-binding protein G(o) subunit alpha">
    <location>
        <begin position="2"/>
        <end position="354"/>
    </location>
</feature>
<feature type="domain" description="G-alpha" evidence="3">
    <location>
        <begin position="32"/>
        <end position="354"/>
    </location>
</feature>
<feature type="region of interest" description="G1 motif" evidence="3">
    <location>
        <begin position="35"/>
        <end position="48"/>
    </location>
</feature>
<feature type="region of interest" description="G2 motif" evidence="3">
    <location>
        <begin position="174"/>
        <end position="182"/>
    </location>
</feature>
<feature type="region of interest" description="G3 motif" evidence="3">
    <location>
        <begin position="197"/>
        <end position="206"/>
    </location>
</feature>
<feature type="region of interest" description="G4 motif" evidence="3">
    <location>
        <begin position="266"/>
        <end position="273"/>
    </location>
</feature>
<feature type="region of interest" description="G5 motif" evidence="3">
    <location>
        <begin position="324"/>
        <end position="329"/>
    </location>
</feature>
<feature type="binding site" evidence="1">
    <location>
        <begin position="40"/>
        <end position="47"/>
    </location>
    <ligand>
        <name>GTP</name>
        <dbReference type="ChEBI" id="CHEBI:37565"/>
    </ligand>
</feature>
<feature type="binding site" evidence="1">
    <location>
        <position position="47"/>
    </location>
    <ligand>
        <name>Mg(2+)</name>
        <dbReference type="ChEBI" id="CHEBI:18420"/>
    </ligand>
</feature>
<feature type="binding site" evidence="1">
    <location>
        <begin position="176"/>
        <end position="182"/>
    </location>
    <ligand>
        <name>GTP</name>
        <dbReference type="ChEBI" id="CHEBI:37565"/>
    </ligand>
</feature>
<feature type="binding site" evidence="1">
    <location>
        <position position="182"/>
    </location>
    <ligand>
        <name>Mg(2+)</name>
        <dbReference type="ChEBI" id="CHEBI:18420"/>
    </ligand>
</feature>
<feature type="binding site" evidence="1">
    <location>
        <begin position="201"/>
        <end position="205"/>
    </location>
    <ligand>
        <name>GTP</name>
        <dbReference type="ChEBI" id="CHEBI:37565"/>
    </ligand>
</feature>
<feature type="binding site" evidence="1">
    <location>
        <begin position="270"/>
        <end position="273"/>
    </location>
    <ligand>
        <name>GTP</name>
        <dbReference type="ChEBI" id="CHEBI:37565"/>
    </ligand>
</feature>
<feature type="binding site" evidence="1">
    <location>
        <position position="326"/>
    </location>
    <ligand>
        <name>GTP</name>
        <dbReference type="ChEBI" id="CHEBI:37565"/>
    </ligand>
</feature>
<feature type="lipid moiety-binding region" description="N-myristoyl glycine" evidence="2">
    <location>
        <position position="2"/>
    </location>
</feature>
<feature type="lipid moiety-binding region" description="S-palmitoyl cysteine" evidence="2">
    <location>
        <position position="3"/>
    </location>
</feature>